<sequence>MTTETRSLYSQLPAIDRLLRDSSFLSLRDTYGHTRVVELLRQMLDEAREVIRGSQTLPAWCENWAQEVDARLTKEAQSALRPVINLTGTVLHTNLGRALQAEAAVEAVTKAMRSPVTLEYDLDDAGRGHRDRALAQLLCRITGAEDACIVNNNAAAVLLMLAATASGKEVVVSRGELVEIGGAFRIPDVMRQAGCTLHEVGTTNRTHANDYRQAVNENTALLMKVHTSNYSIQGFTKAIDEAELVALGKELDVPVVTDLGSGSLVDLSQYGLPKEPMPQELIAAGVSLVSFSGDKLLGGPQAGIIVGKKEMIARLQSHPLKRALRADKMTLAALEATLRLYLHPEALSKKLPTLRLLTRSAEVIQIQAQRLQAPLAAHYGAEFAVQVMPCLSQIGSGSLPVDRLPSAALTFTPHDGRGSHLESLAARWRELPVPVIGRIYDGRLWLDLRCLEDEQRFLEMLLK</sequence>
<protein>
    <recommendedName>
        <fullName evidence="1">L-seryl-tRNA(Sec) selenium transferase</fullName>
        <ecNumber evidence="1">2.9.1.1</ecNumber>
    </recommendedName>
    <alternativeName>
        <fullName evidence="1">Selenocysteine synthase</fullName>
        <shortName evidence="1">Sec synthase</shortName>
    </alternativeName>
    <alternativeName>
        <fullName evidence="1">Selenocysteinyl-tRNA(Sec) synthase</fullName>
    </alternativeName>
</protein>
<keyword id="KW-0963">Cytoplasm</keyword>
<keyword id="KW-0648">Protein biosynthesis</keyword>
<keyword id="KW-0663">Pyridoxal phosphate</keyword>
<keyword id="KW-0711">Selenium</keyword>
<keyword id="KW-0808">Transferase</keyword>
<gene>
    <name evidence="1" type="primary">selA</name>
    <name type="ordered locus">EcSMS35_3919</name>
</gene>
<comment type="function">
    <text evidence="1">Converts seryl-tRNA(Sec) to selenocysteinyl-tRNA(Sec) required for selenoprotein biosynthesis.</text>
</comment>
<comment type="catalytic activity">
    <reaction evidence="1">
        <text>L-seryl-tRNA(Sec) + selenophosphate + H(+) = L-selenocysteinyl-tRNA(Sec) + phosphate</text>
        <dbReference type="Rhea" id="RHEA:22728"/>
        <dbReference type="Rhea" id="RHEA-COMP:9742"/>
        <dbReference type="Rhea" id="RHEA-COMP:9743"/>
        <dbReference type="ChEBI" id="CHEBI:15378"/>
        <dbReference type="ChEBI" id="CHEBI:16144"/>
        <dbReference type="ChEBI" id="CHEBI:43474"/>
        <dbReference type="ChEBI" id="CHEBI:78533"/>
        <dbReference type="ChEBI" id="CHEBI:78573"/>
        <dbReference type="EC" id="2.9.1.1"/>
    </reaction>
</comment>
<comment type="cofactor">
    <cofactor evidence="1">
        <name>pyridoxal 5'-phosphate</name>
        <dbReference type="ChEBI" id="CHEBI:597326"/>
    </cofactor>
</comment>
<comment type="pathway">
    <text evidence="1">Aminoacyl-tRNA biosynthesis; selenocysteinyl-tRNA(Sec) biosynthesis; selenocysteinyl-tRNA(Sec) from L-seryl-tRNA(Sec) (bacterial route): step 1/1.</text>
</comment>
<comment type="subunit">
    <text evidence="1">Homodecamer; pentamer of dimers. Binds only one seryl-tRNA(Sec) per dimer.</text>
</comment>
<comment type="subcellular location">
    <subcellularLocation>
        <location evidence="1">Cytoplasm</location>
    </subcellularLocation>
</comment>
<comment type="similarity">
    <text evidence="1">Belongs to the SelA family.</text>
</comment>
<name>SELA_ECOSM</name>
<feature type="chain" id="PRO_1000124143" description="L-seryl-tRNA(Sec) selenium transferase">
    <location>
        <begin position="1"/>
        <end position="463"/>
    </location>
</feature>
<feature type="modified residue" description="N6-(pyridoxal phosphate)lysine" evidence="1">
    <location>
        <position position="295"/>
    </location>
</feature>
<dbReference type="EC" id="2.9.1.1" evidence="1"/>
<dbReference type="EMBL" id="CP000970">
    <property type="protein sequence ID" value="ACB16751.1"/>
    <property type="molecule type" value="Genomic_DNA"/>
</dbReference>
<dbReference type="RefSeq" id="WP_000206287.1">
    <property type="nucleotide sequence ID" value="NC_010498.1"/>
</dbReference>
<dbReference type="SMR" id="B1LK21"/>
<dbReference type="KEGG" id="ecm:EcSMS35_3919"/>
<dbReference type="HOGENOM" id="CLU_038142_1_0_6"/>
<dbReference type="UniPathway" id="UPA00906">
    <property type="reaction ID" value="UER00896"/>
</dbReference>
<dbReference type="Proteomes" id="UP000007011">
    <property type="component" value="Chromosome"/>
</dbReference>
<dbReference type="GO" id="GO:0005737">
    <property type="term" value="C:cytoplasm"/>
    <property type="evidence" value="ECO:0007669"/>
    <property type="project" value="UniProtKB-SubCell"/>
</dbReference>
<dbReference type="GO" id="GO:0004125">
    <property type="term" value="F:L-seryl-tRNA(Sec) selenium transferase activity"/>
    <property type="evidence" value="ECO:0007669"/>
    <property type="project" value="UniProtKB-UniRule"/>
</dbReference>
<dbReference type="GO" id="GO:0001717">
    <property type="term" value="P:conversion of seryl-tRNAsec to selenocys-tRNAsec"/>
    <property type="evidence" value="ECO:0007669"/>
    <property type="project" value="UniProtKB-UniRule"/>
</dbReference>
<dbReference type="GO" id="GO:0001514">
    <property type="term" value="P:selenocysteine incorporation"/>
    <property type="evidence" value="ECO:0007669"/>
    <property type="project" value="UniProtKB-UniRule"/>
</dbReference>
<dbReference type="FunFam" id="3.40.640.10:FF:000028">
    <property type="entry name" value="L-seryl-tRNA(Sec) selenium transferase"/>
    <property type="match status" value="1"/>
</dbReference>
<dbReference type="FunFam" id="3.90.1150.180:FF:000001">
    <property type="entry name" value="L-seryl-tRNA(Sec) selenium transferase"/>
    <property type="match status" value="1"/>
</dbReference>
<dbReference type="Gene3D" id="3.90.1150.180">
    <property type="match status" value="1"/>
</dbReference>
<dbReference type="Gene3D" id="3.40.640.10">
    <property type="entry name" value="Type I PLP-dependent aspartate aminotransferase-like (Major domain)"/>
    <property type="match status" value="1"/>
</dbReference>
<dbReference type="HAMAP" id="MF_00423">
    <property type="entry name" value="SelA"/>
    <property type="match status" value="1"/>
</dbReference>
<dbReference type="InterPro" id="IPR015424">
    <property type="entry name" value="PyrdxlP-dep_Trfase"/>
</dbReference>
<dbReference type="InterPro" id="IPR015421">
    <property type="entry name" value="PyrdxlP-dep_Trfase_major"/>
</dbReference>
<dbReference type="InterPro" id="IPR018319">
    <property type="entry name" value="SelA-like"/>
</dbReference>
<dbReference type="InterPro" id="IPR004534">
    <property type="entry name" value="SelA_trans"/>
</dbReference>
<dbReference type="InterPro" id="IPR025862">
    <property type="entry name" value="SelA_trans_N_dom"/>
</dbReference>
<dbReference type="NCBIfam" id="TIGR00474">
    <property type="entry name" value="selA"/>
    <property type="match status" value="1"/>
</dbReference>
<dbReference type="PANTHER" id="PTHR32328">
    <property type="entry name" value="L-SERYL-TRNA(SEC) SELENIUM TRANSFERASE"/>
    <property type="match status" value="1"/>
</dbReference>
<dbReference type="PANTHER" id="PTHR32328:SF0">
    <property type="entry name" value="L-SERYL-TRNA(SEC) SELENIUM TRANSFERASE"/>
    <property type="match status" value="1"/>
</dbReference>
<dbReference type="Pfam" id="PF12390">
    <property type="entry name" value="Se-cys_synth_N"/>
    <property type="match status" value="1"/>
</dbReference>
<dbReference type="Pfam" id="PF03841">
    <property type="entry name" value="SelA"/>
    <property type="match status" value="1"/>
</dbReference>
<dbReference type="SUPFAM" id="SSF53383">
    <property type="entry name" value="PLP-dependent transferases"/>
    <property type="match status" value="1"/>
</dbReference>
<reference key="1">
    <citation type="journal article" date="2008" name="J. Bacteriol.">
        <title>Insights into the environmental resistance gene pool from the genome sequence of the multidrug-resistant environmental isolate Escherichia coli SMS-3-5.</title>
        <authorList>
            <person name="Fricke W.F."/>
            <person name="Wright M.S."/>
            <person name="Lindell A.H."/>
            <person name="Harkins D.M."/>
            <person name="Baker-Austin C."/>
            <person name="Ravel J."/>
            <person name="Stepanauskas R."/>
        </authorList>
    </citation>
    <scope>NUCLEOTIDE SEQUENCE [LARGE SCALE GENOMIC DNA]</scope>
    <source>
        <strain>SMS-3-5 / SECEC</strain>
    </source>
</reference>
<accession>B1LK21</accession>
<proteinExistence type="inferred from homology"/>
<evidence type="ECO:0000255" key="1">
    <source>
        <dbReference type="HAMAP-Rule" id="MF_00423"/>
    </source>
</evidence>
<organism>
    <name type="scientific">Escherichia coli (strain SMS-3-5 / SECEC)</name>
    <dbReference type="NCBI Taxonomy" id="439855"/>
    <lineage>
        <taxon>Bacteria</taxon>
        <taxon>Pseudomonadati</taxon>
        <taxon>Pseudomonadota</taxon>
        <taxon>Gammaproteobacteria</taxon>
        <taxon>Enterobacterales</taxon>
        <taxon>Enterobacteriaceae</taxon>
        <taxon>Escherichia</taxon>
    </lineage>
</organism>